<reference key="1">
    <citation type="journal article" date="2007" name="Toxicon">
        <title>Venomic analyses of Scolopendra viridicornis nigra and Scolopendra angulata (Centipede, Scolopendromorpha): shedding light on venoms from a neglected group.</title>
        <authorList>
            <person name="Rates B."/>
            <person name="Bemquerer M.P."/>
            <person name="Richardson M."/>
            <person name="Borges M.H."/>
            <person name="Morales R.A.V."/>
            <person name="De Lima M.E."/>
            <person name="Pimenta A.M.C."/>
        </authorList>
    </citation>
    <scope>PROTEIN SEQUENCE</scope>
    <scope>MASS SPECTROMETRY</scope>
    <scope>SUBCELLULAR LOCATION</scope>
    <source>
        <tissue>Venom</tissue>
    </source>
</reference>
<accession>P0C8C8</accession>
<protein>
    <recommendedName>
        <fullName>Scolopendra 6940.74 Da toxin</fullName>
    </recommendedName>
</protein>
<name>STX7_SCOVN</name>
<dbReference type="GO" id="GO:0005576">
    <property type="term" value="C:extracellular region"/>
    <property type="evidence" value="ECO:0007669"/>
    <property type="project" value="UniProtKB-SubCell"/>
</dbReference>
<dbReference type="GO" id="GO:0090729">
    <property type="term" value="F:toxin activity"/>
    <property type="evidence" value="ECO:0007669"/>
    <property type="project" value="UniProtKB-KW"/>
</dbReference>
<proteinExistence type="evidence at protein level"/>
<keyword id="KW-0903">Direct protein sequencing</keyword>
<keyword id="KW-0528">Neurotoxin</keyword>
<keyword id="KW-0964">Secreted</keyword>
<keyword id="KW-0800">Toxin</keyword>
<feature type="chain" id="PRO_0000352864" description="Scolopendra 6940.74 Da toxin">
    <location>
        <begin position="1"/>
        <end position="13" status="greater than"/>
    </location>
</feature>
<feature type="non-terminal residue">
    <location>
        <position position="13"/>
    </location>
</feature>
<evidence type="ECO:0000269" key="1">
    <source>
    </source>
</evidence>
<evidence type="ECO:0000305" key="2"/>
<evidence type="ECO:0000305" key="3">
    <source>
    </source>
</evidence>
<organism>
    <name type="scientific">Scolopendra viridicornis nigra</name>
    <name type="common">Brazilian giant centipede</name>
    <dbReference type="NCBI Taxonomy" id="486497"/>
    <lineage>
        <taxon>Eukaryota</taxon>
        <taxon>Metazoa</taxon>
        <taxon>Ecdysozoa</taxon>
        <taxon>Arthropoda</taxon>
        <taxon>Myriapoda</taxon>
        <taxon>Chilopoda</taxon>
        <taxon>Pleurostigmophora</taxon>
        <taxon>Scolopendromorpha</taxon>
        <taxon>Scolopendridae</taxon>
        <taxon>Scolopendra</taxon>
    </lineage>
</organism>
<sequence length="13" mass="1526">FKSLTKYSPGRQN</sequence>
<comment type="subcellular location">
    <subcellularLocation>
        <location evidence="1">Secreted</location>
    </subcellularLocation>
</comment>
<comment type="tissue specificity">
    <text evidence="3">Expressed by the venom gland.</text>
</comment>
<comment type="mass spectrometry" mass="6940.74" method="Electrospray" evidence="1"/>
<comment type="similarity">
    <text evidence="2">Belongs to the scolopendra toxin 7 family.</text>
</comment>